<name>DEF44_ARATH</name>
<dbReference type="EMBL" id="AC011437">
    <property type="status" value="NOT_ANNOTATED_CDS"/>
    <property type="molecule type" value="Genomic_DNA"/>
</dbReference>
<dbReference type="EMBL" id="AC022287">
    <property type="protein sequence ID" value="AAF63785.1"/>
    <property type="status" value="ALT_INIT"/>
    <property type="molecule type" value="Genomic_DNA"/>
</dbReference>
<dbReference type="EMBL" id="CP002686">
    <property type="protein sequence ID" value="AEE74094.1"/>
    <property type="molecule type" value="Genomic_DNA"/>
</dbReference>
<dbReference type="RefSeq" id="NP_187104.2">
    <property type="nucleotide sequence ID" value="NM_111325.6"/>
</dbReference>
<dbReference type="STRING" id="3702.Q9M833"/>
<dbReference type="PaxDb" id="3702-AT3G04540.1"/>
<dbReference type="ProteomicsDB" id="224225"/>
<dbReference type="EnsemblPlants" id="AT3G04540.1">
    <property type="protein sequence ID" value="AT3G04540.1"/>
    <property type="gene ID" value="AT3G04540"/>
</dbReference>
<dbReference type="GeneID" id="819610"/>
<dbReference type="Gramene" id="AT3G04540.1">
    <property type="protein sequence ID" value="AT3G04540.1"/>
    <property type="gene ID" value="AT3G04540"/>
</dbReference>
<dbReference type="KEGG" id="ath:AT3G04540"/>
<dbReference type="Araport" id="AT3G04540"/>
<dbReference type="TAIR" id="AT3G04540"/>
<dbReference type="HOGENOM" id="CLU_165205_1_0_1"/>
<dbReference type="InParanoid" id="Q9M833"/>
<dbReference type="OMA" id="CKEMCSA"/>
<dbReference type="PhylomeDB" id="Q9M833"/>
<dbReference type="PRO" id="PR:Q9M833"/>
<dbReference type="Proteomes" id="UP000006548">
    <property type="component" value="Chromosome 3"/>
</dbReference>
<dbReference type="ExpressionAtlas" id="Q9M833">
    <property type="expression patterns" value="baseline and differential"/>
</dbReference>
<dbReference type="GO" id="GO:0005576">
    <property type="term" value="C:extracellular region"/>
    <property type="evidence" value="ECO:0007669"/>
    <property type="project" value="UniProtKB-SubCell"/>
</dbReference>
<dbReference type="GO" id="GO:0050832">
    <property type="term" value="P:defense response to fungus"/>
    <property type="evidence" value="ECO:0007669"/>
    <property type="project" value="UniProtKB-KW"/>
</dbReference>
<dbReference type="GO" id="GO:0031640">
    <property type="term" value="P:killing of cells of another organism"/>
    <property type="evidence" value="ECO:0007669"/>
    <property type="project" value="UniProtKB-KW"/>
</dbReference>
<dbReference type="InterPro" id="IPR056373">
    <property type="entry name" value="Defensin-like_dom"/>
</dbReference>
<dbReference type="Pfam" id="PF24552">
    <property type="entry name" value="Defensin"/>
    <property type="match status" value="1"/>
</dbReference>
<evidence type="ECO:0000250" key="1"/>
<evidence type="ECO:0000255" key="2"/>
<evidence type="ECO:0000305" key="3"/>
<protein>
    <recommendedName>
        <fullName>Defensin-like protein 44</fullName>
    </recommendedName>
</protein>
<comment type="subcellular location">
    <subcellularLocation>
        <location evidence="1">Secreted</location>
    </subcellularLocation>
</comment>
<comment type="similarity">
    <text evidence="3">Belongs to the DEFL family.</text>
</comment>
<comment type="sequence caution" evidence="3">
    <conflict type="erroneous initiation">
        <sequence resource="EMBL-CDS" id="AAF63785"/>
    </conflict>
</comment>
<proteinExistence type="evidence at transcript level"/>
<reference key="1">
    <citation type="journal article" date="2000" name="Nature">
        <title>Sequence and analysis of chromosome 3 of the plant Arabidopsis thaliana.</title>
        <authorList>
            <person name="Salanoubat M."/>
            <person name="Lemcke K."/>
            <person name="Rieger M."/>
            <person name="Ansorge W."/>
            <person name="Unseld M."/>
            <person name="Fartmann B."/>
            <person name="Valle G."/>
            <person name="Bloecker H."/>
            <person name="Perez-Alonso M."/>
            <person name="Obermaier B."/>
            <person name="Delseny M."/>
            <person name="Boutry M."/>
            <person name="Grivell L.A."/>
            <person name="Mache R."/>
            <person name="Puigdomenech P."/>
            <person name="De Simone V."/>
            <person name="Choisne N."/>
            <person name="Artiguenave F."/>
            <person name="Robert C."/>
            <person name="Brottier P."/>
            <person name="Wincker P."/>
            <person name="Cattolico L."/>
            <person name="Weissenbach J."/>
            <person name="Saurin W."/>
            <person name="Quetier F."/>
            <person name="Schaefer M."/>
            <person name="Mueller-Auer S."/>
            <person name="Gabel C."/>
            <person name="Fuchs M."/>
            <person name="Benes V."/>
            <person name="Wurmbach E."/>
            <person name="Drzonek H."/>
            <person name="Erfle H."/>
            <person name="Jordan N."/>
            <person name="Bangert S."/>
            <person name="Wiedelmann R."/>
            <person name="Kranz H."/>
            <person name="Voss H."/>
            <person name="Holland R."/>
            <person name="Brandt P."/>
            <person name="Nyakatura G."/>
            <person name="Vezzi A."/>
            <person name="D'Angelo M."/>
            <person name="Pallavicini A."/>
            <person name="Toppo S."/>
            <person name="Simionati B."/>
            <person name="Conrad A."/>
            <person name="Hornischer K."/>
            <person name="Kauer G."/>
            <person name="Loehnert T.-H."/>
            <person name="Nordsiek G."/>
            <person name="Reichelt J."/>
            <person name="Scharfe M."/>
            <person name="Schoen O."/>
            <person name="Bargues M."/>
            <person name="Terol J."/>
            <person name="Climent J."/>
            <person name="Navarro P."/>
            <person name="Collado C."/>
            <person name="Perez-Perez A."/>
            <person name="Ottenwaelder B."/>
            <person name="Duchemin D."/>
            <person name="Cooke R."/>
            <person name="Laudie M."/>
            <person name="Berger-Llauro C."/>
            <person name="Purnelle B."/>
            <person name="Masuy D."/>
            <person name="de Haan M."/>
            <person name="Maarse A.C."/>
            <person name="Alcaraz J.-P."/>
            <person name="Cottet A."/>
            <person name="Casacuberta E."/>
            <person name="Monfort A."/>
            <person name="Argiriou A."/>
            <person name="Flores M."/>
            <person name="Liguori R."/>
            <person name="Vitale D."/>
            <person name="Mannhaupt G."/>
            <person name="Haase D."/>
            <person name="Schoof H."/>
            <person name="Rudd S."/>
            <person name="Zaccaria P."/>
            <person name="Mewes H.-W."/>
            <person name="Mayer K.F.X."/>
            <person name="Kaul S."/>
            <person name="Town C.D."/>
            <person name="Koo H.L."/>
            <person name="Tallon L.J."/>
            <person name="Jenkins J."/>
            <person name="Rooney T."/>
            <person name="Rizzo M."/>
            <person name="Walts A."/>
            <person name="Utterback T."/>
            <person name="Fujii C.Y."/>
            <person name="Shea T.P."/>
            <person name="Creasy T.H."/>
            <person name="Haas B."/>
            <person name="Maiti R."/>
            <person name="Wu D."/>
            <person name="Peterson J."/>
            <person name="Van Aken S."/>
            <person name="Pai G."/>
            <person name="Militscher J."/>
            <person name="Sellers P."/>
            <person name="Gill J.E."/>
            <person name="Feldblyum T.V."/>
            <person name="Preuss D."/>
            <person name="Lin X."/>
            <person name="Nierman W.C."/>
            <person name="Salzberg S.L."/>
            <person name="White O."/>
            <person name="Venter J.C."/>
            <person name="Fraser C.M."/>
            <person name="Kaneko T."/>
            <person name="Nakamura Y."/>
            <person name="Sato S."/>
            <person name="Kato T."/>
            <person name="Asamizu E."/>
            <person name="Sasamoto S."/>
            <person name="Kimura T."/>
            <person name="Idesawa K."/>
            <person name="Kawashima K."/>
            <person name="Kishida Y."/>
            <person name="Kiyokawa C."/>
            <person name="Kohara M."/>
            <person name="Matsumoto M."/>
            <person name="Matsuno A."/>
            <person name="Muraki A."/>
            <person name="Nakayama S."/>
            <person name="Nakazaki N."/>
            <person name="Shinpo S."/>
            <person name="Takeuchi C."/>
            <person name="Wada T."/>
            <person name="Watanabe A."/>
            <person name="Yamada M."/>
            <person name="Yasuda M."/>
            <person name="Tabata S."/>
        </authorList>
    </citation>
    <scope>NUCLEOTIDE SEQUENCE [LARGE SCALE GENOMIC DNA]</scope>
    <source>
        <strain>cv. Columbia</strain>
    </source>
</reference>
<reference key="2">
    <citation type="journal article" date="2017" name="Plant J.">
        <title>Araport11: a complete reannotation of the Arabidopsis thaliana reference genome.</title>
        <authorList>
            <person name="Cheng C.Y."/>
            <person name="Krishnakumar V."/>
            <person name="Chan A.P."/>
            <person name="Thibaud-Nissen F."/>
            <person name="Schobel S."/>
            <person name="Town C.D."/>
        </authorList>
    </citation>
    <scope>GENOME REANNOTATION</scope>
    <source>
        <strain>cv. Columbia</strain>
    </source>
</reference>
<reference key="3">
    <citation type="journal article" date="2005" name="Plant Physiol.">
        <title>Genome organization of more than 300 defensin-like genes in Arabidopsis.</title>
        <authorList>
            <person name="Silverstein K.A.T."/>
            <person name="Graham M.A."/>
            <person name="Paape T.D."/>
            <person name="VandenBosch K.A."/>
        </authorList>
    </citation>
    <scope>GENE FAMILY</scope>
</reference>
<gene>
    <name type="ordered locus">At3g04540</name>
    <name type="ORF">F7O18.19</name>
    <name type="ORF">T27C4.20</name>
</gene>
<sequence length="80" mass="8363">MAITKTSVTLLLLIIMAASLSNFSVLASEIKPTGRVDNQCKEMCSATFGDGKCAADCRKAGFSSGRCLTSSPFGNKCCCT</sequence>
<accession>Q9M833</accession>
<organism>
    <name type="scientific">Arabidopsis thaliana</name>
    <name type="common">Mouse-ear cress</name>
    <dbReference type="NCBI Taxonomy" id="3702"/>
    <lineage>
        <taxon>Eukaryota</taxon>
        <taxon>Viridiplantae</taxon>
        <taxon>Streptophyta</taxon>
        <taxon>Embryophyta</taxon>
        <taxon>Tracheophyta</taxon>
        <taxon>Spermatophyta</taxon>
        <taxon>Magnoliopsida</taxon>
        <taxon>eudicotyledons</taxon>
        <taxon>Gunneridae</taxon>
        <taxon>Pentapetalae</taxon>
        <taxon>rosids</taxon>
        <taxon>malvids</taxon>
        <taxon>Brassicales</taxon>
        <taxon>Brassicaceae</taxon>
        <taxon>Camelineae</taxon>
        <taxon>Arabidopsis</taxon>
    </lineage>
</organism>
<keyword id="KW-0929">Antimicrobial</keyword>
<keyword id="KW-1015">Disulfide bond</keyword>
<keyword id="KW-0295">Fungicide</keyword>
<keyword id="KW-0611">Plant defense</keyword>
<keyword id="KW-1185">Reference proteome</keyword>
<keyword id="KW-0964">Secreted</keyword>
<keyword id="KW-0732">Signal</keyword>
<feature type="signal peptide" evidence="2">
    <location>
        <begin position="1"/>
        <end position="27"/>
    </location>
</feature>
<feature type="chain" id="PRO_0000379626" description="Defensin-like protein 44">
    <location>
        <begin position="28"/>
        <end position="80"/>
    </location>
</feature>
<feature type="disulfide bond" evidence="1">
    <location>
        <begin position="40"/>
        <end position="79"/>
    </location>
</feature>
<feature type="disulfide bond" evidence="1">
    <location>
        <begin position="44"/>
        <end position="67"/>
    </location>
</feature>
<feature type="disulfide bond" evidence="1">
    <location>
        <begin position="53"/>
        <end position="77"/>
    </location>
</feature>
<feature type="disulfide bond" evidence="1">
    <location>
        <begin position="57"/>
        <end position="78"/>
    </location>
</feature>